<dbReference type="EC" id="6.3.2.48" evidence="2"/>
<dbReference type="EMBL" id="AB437349">
    <property type="protein sequence ID" value="BAG72134.1"/>
    <property type="molecule type" value="Genomic_DNA"/>
</dbReference>
<dbReference type="PDB" id="4WD3">
    <property type="method" value="X-ray"/>
    <property type="resolution" value="2.80 A"/>
    <property type="chains" value="A/B=1-413"/>
</dbReference>
<dbReference type="PDBsum" id="4WD3"/>
<dbReference type="SMR" id="B5UAT8"/>
<dbReference type="KEGG" id="ag:BAG72134"/>
<dbReference type="BioCyc" id="MetaCyc:MONOMER-18696"/>
<dbReference type="BRENDA" id="6.3.2.48">
    <property type="organism ID" value="658"/>
</dbReference>
<dbReference type="EvolutionaryTrace" id="B5UAT8"/>
<dbReference type="GO" id="GO:0005524">
    <property type="term" value="F:ATP binding"/>
    <property type="evidence" value="ECO:0007669"/>
    <property type="project" value="UniProtKB-KW"/>
</dbReference>
<dbReference type="GO" id="GO:0016874">
    <property type="term" value="F:ligase activity"/>
    <property type="evidence" value="ECO:0007669"/>
    <property type="project" value="UniProtKB-KW"/>
</dbReference>
<dbReference type="GO" id="GO:0046872">
    <property type="term" value="F:metal ion binding"/>
    <property type="evidence" value="ECO:0007669"/>
    <property type="project" value="UniProtKB-KW"/>
</dbReference>
<dbReference type="Gene3D" id="3.40.50.20">
    <property type="match status" value="1"/>
</dbReference>
<dbReference type="Gene3D" id="3.30.1490.20">
    <property type="entry name" value="ATP-grasp fold, A domain"/>
    <property type="match status" value="1"/>
</dbReference>
<dbReference type="Gene3D" id="3.30.470.20">
    <property type="entry name" value="ATP-grasp fold, B domain"/>
    <property type="match status" value="1"/>
</dbReference>
<dbReference type="InterPro" id="IPR052032">
    <property type="entry name" value="ATP-dep_AA_Ligase"/>
</dbReference>
<dbReference type="InterPro" id="IPR011761">
    <property type="entry name" value="ATP-grasp"/>
</dbReference>
<dbReference type="InterPro" id="IPR013815">
    <property type="entry name" value="ATP_grasp_subdomain_1"/>
</dbReference>
<dbReference type="PANTHER" id="PTHR43585:SF2">
    <property type="entry name" value="ATP-GRASP ENZYME FSQD"/>
    <property type="match status" value="1"/>
</dbReference>
<dbReference type="PANTHER" id="PTHR43585">
    <property type="entry name" value="FUMIPYRROLE BIOSYNTHESIS PROTEIN C"/>
    <property type="match status" value="1"/>
</dbReference>
<dbReference type="Pfam" id="PF13535">
    <property type="entry name" value="ATP-grasp_4"/>
    <property type="match status" value="1"/>
</dbReference>
<dbReference type="SUPFAM" id="SSF56059">
    <property type="entry name" value="Glutathione synthetase ATP-binding domain-like"/>
    <property type="match status" value="1"/>
</dbReference>
<dbReference type="PROSITE" id="PS50975">
    <property type="entry name" value="ATP_GRASP"/>
    <property type="match status" value="1"/>
</dbReference>
<accession>B5UAT8</accession>
<gene>
    <name evidence="3" type="primary">rizA</name>
</gene>
<comment type="function">
    <text evidence="2">Catalyzes the synthesis of Arg-Xaa dipeptides in an ATP-dependent manner. Has strict specificity toward arginine as the N-terminal substrate.</text>
</comment>
<comment type="catalytic activity">
    <reaction evidence="2">
        <text>an L-alpha-amino acid + L-arginine + ATP = L-arginyl-L-alpha-amino acid + ADP + phosphate + H(+)</text>
        <dbReference type="Rhea" id="RHEA:44336"/>
        <dbReference type="ChEBI" id="CHEBI:15378"/>
        <dbReference type="ChEBI" id="CHEBI:30616"/>
        <dbReference type="ChEBI" id="CHEBI:32682"/>
        <dbReference type="ChEBI" id="CHEBI:43474"/>
        <dbReference type="ChEBI" id="CHEBI:59869"/>
        <dbReference type="ChEBI" id="CHEBI:84315"/>
        <dbReference type="ChEBI" id="CHEBI:456216"/>
        <dbReference type="EC" id="6.3.2.48"/>
    </reaction>
</comment>
<comment type="cofactor">
    <cofactor evidence="1 2">
        <name>Mg(2+)</name>
        <dbReference type="ChEBI" id="CHEBI:18420"/>
    </cofactor>
    <cofactor evidence="1 2">
        <name>Mn(2+)</name>
        <dbReference type="ChEBI" id="CHEBI:29035"/>
    </cofactor>
    <cofactor evidence="2">
        <name>Co(2+)</name>
        <dbReference type="ChEBI" id="CHEBI:48828"/>
    </cofactor>
    <text evidence="2">Activity is maximal in the presence of Mg(2+). The use of Mn(2+) or Co(2+) decreases ligase activity.</text>
</comment>
<comment type="biophysicochemical properties">
    <phDependence>
        <text evidence="2">Optimum pH is 9.5.</text>
    </phDependence>
    <temperatureDependence>
        <text evidence="2">Optimum temperature is 37 degrees Celsius.</text>
    </temperatureDependence>
</comment>
<comment type="subunit">
    <text evidence="2">Homodimer.</text>
</comment>
<proteinExistence type="evidence at protein level"/>
<protein>
    <recommendedName>
        <fullName evidence="4">L-arginine-specific L-amino acid ligase</fullName>
        <ecNumber evidence="2">6.3.2.48</ecNumber>
    </recommendedName>
    <alternativeName>
        <fullName evidence="3">L-amino acid ligase RizA</fullName>
    </alternativeName>
</protein>
<name>RIZA_BACIU</name>
<sequence>MLRILLINSDKPEPIQFFQKDKETNDSINISVITRSCYAPLYSHWADHVYIVDDVTDLTVMKSLMLEILKVGPFDHIVSTTEKSILTGGFLRSYFGIAGPGFETALYMTNKLAMKTKLKMEGIPVADFLCVSQVEDIPAAGEKLGWPIIVKPALGSGALNTFIIHSLDHYEDLYSTSGGLGELKKNNSLMIAEKCIEMEEFHCDTLYADGEILFVSISKYTVPLLKGMAKIQGSFILSQNDPVYAEILELQKSVAQAFRITDGPGHLEIYRTHSGELIVGEIAMRIGGGGISRMIEKKFNISLWESSLNISVYRDPNLTVNPIEGTVGYFSLPCRNGTIKEFTPIEEWEKLAGILEVELLYQEGDVVDEKQSSSFDLARLYFCLENENEVQHLLALVKQTYYLHLTEDHMMNQ</sequence>
<reference key="1">
    <citation type="journal article" date="2009" name="Biosci. Biotechnol. Biochem.">
        <title>A novel L-amino acid ligase from Bacillus subtilis NBRC3134, a microorganism producing peptide-antibiotic rhizocticin.</title>
        <authorList>
            <person name="Kino K."/>
            <person name="Kotanaka Y."/>
            <person name="Arai T."/>
            <person name="Yagasaki M."/>
        </authorList>
    </citation>
    <scope>NUCLEOTIDE SEQUENCE [GENOMIC DNA]</scope>
    <scope>PROTEIN SEQUENCE OF 1-25</scope>
    <scope>FUNCTION</scope>
    <scope>CATALYTIC ACTIVITY</scope>
    <scope>COFACTOR</scope>
    <scope>BIOPHYSICOCHEMICAL PROPERTIES</scope>
    <scope>SUBUNIT</scope>
    <source>
        <strain>ATCC 6633 / PCI 219 / NRS 231</strain>
    </source>
</reference>
<reference key="2">
    <citation type="journal article" date="2015" name="Acta Crystallogr. F">
        <title>Structure of RizA, an L-amino-acid ligase from Bacillus subtilis.</title>
        <authorList>
            <person name="Kagawa W."/>
            <person name="Arai T."/>
            <person name="Ishikura S."/>
            <person name="Kino K."/>
            <person name="Kurumizaka H."/>
        </authorList>
    </citation>
    <scope>X-RAY CRYSTALLOGRAPHY (2.8 ANGSTROMS)</scope>
    <source>
        <strain>ATCC 6633 / PCI 219 / NRS 231</strain>
    </source>
</reference>
<evidence type="ECO:0000255" key="1">
    <source>
        <dbReference type="PROSITE-ProRule" id="PRU00409"/>
    </source>
</evidence>
<evidence type="ECO:0000269" key="2">
    <source>
    </source>
</evidence>
<evidence type="ECO:0000303" key="3">
    <source>
    </source>
</evidence>
<evidence type="ECO:0000305" key="4"/>
<evidence type="ECO:0007829" key="5">
    <source>
        <dbReference type="PDB" id="4WD3"/>
    </source>
</evidence>
<organism>
    <name type="scientific">Bacillus subtilis</name>
    <dbReference type="NCBI Taxonomy" id="1423"/>
    <lineage>
        <taxon>Bacteria</taxon>
        <taxon>Bacillati</taxon>
        <taxon>Bacillota</taxon>
        <taxon>Bacilli</taxon>
        <taxon>Bacillales</taxon>
        <taxon>Bacillaceae</taxon>
        <taxon>Bacillus</taxon>
    </lineage>
</organism>
<keyword id="KW-0002">3D-structure</keyword>
<keyword id="KW-0067">ATP-binding</keyword>
<keyword id="KW-0170">Cobalt</keyword>
<keyword id="KW-0903">Direct protein sequencing</keyword>
<keyword id="KW-0436">Ligase</keyword>
<keyword id="KW-0460">Magnesium</keyword>
<keyword id="KW-0464">Manganese</keyword>
<keyword id="KW-0479">Metal-binding</keyword>
<keyword id="KW-0547">Nucleotide-binding</keyword>
<feature type="chain" id="PRO_0000434829" description="L-arginine-specific L-amino acid ligase">
    <location>
        <begin position="1"/>
        <end position="413"/>
    </location>
</feature>
<feature type="domain" description="ATP-grasp" evidence="1">
    <location>
        <begin position="115"/>
        <end position="312"/>
    </location>
</feature>
<feature type="binding site" evidence="1">
    <location>
        <begin position="141"/>
        <end position="202"/>
    </location>
    <ligand>
        <name>ATP</name>
        <dbReference type="ChEBI" id="CHEBI:30616"/>
    </ligand>
</feature>
<feature type="binding site" evidence="1">
    <location>
        <position position="268"/>
    </location>
    <ligand>
        <name>Mg(2+)</name>
        <dbReference type="ChEBI" id="CHEBI:18420"/>
    </ligand>
</feature>
<feature type="binding site" evidence="1">
    <location>
        <position position="268"/>
    </location>
    <ligand>
        <name>Mn(2+)</name>
        <dbReference type="ChEBI" id="CHEBI:29035"/>
    </ligand>
</feature>
<feature type="binding site" evidence="1">
    <location>
        <position position="281"/>
    </location>
    <ligand>
        <name>Mg(2+)</name>
        <dbReference type="ChEBI" id="CHEBI:18420"/>
    </ligand>
</feature>
<feature type="binding site" evidence="1">
    <location>
        <position position="281"/>
    </location>
    <ligand>
        <name>Mn(2+)</name>
        <dbReference type="ChEBI" id="CHEBI:29035"/>
    </ligand>
</feature>
<feature type="strand" evidence="5">
    <location>
        <begin position="2"/>
        <end position="7"/>
    </location>
</feature>
<feature type="helix" evidence="5">
    <location>
        <begin position="12"/>
        <end position="24"/>
    </location>
</feature>
<feature type="strand" evidence="5">
    <location>
        <begin position="28"/>
        <end position="34"/>
    </location>
</feature>
<feature type="helix" evidence="5">
    <location>
        <begin position="36"/>
        <end position="41"/>
    </location>
</feature>
<feature type="turn" evidence="5">
    <location>
        <begin position="42"/>
        <end position="45"/>
    </location>
</feature>
<feature type="strand" evidence="5">
    <location>
        <begin position="47"/>
        <end position="51"/>
    </location>
</feature>
<feature type="helix" evidence="5">
    <location>
        <begin position="58"/>
        <end position="71"/>
    </location>
</feature>
<feature type="strand" evidence="5">
    <location>
        <begin position="75"/>
        <end position="79"/>
    </location>
</feature>
<feature type="helix" evidence="5">
    <location>
        <begin position="82"/>
        <end position="84"/>
    </location>
</feature>
<feature type="helix" evidence="5">
    <location>
        <begin position="85"/>
        <end position="94"/>
    </location>
</feature>
<feature type="strand" evidence="5">
    <location>
        <begin position="98"/>
        <end position="100"/>
    </location>
</feature>
<feature type="helix" evidence="5">
    <location>
        <begin position="102"/>
        <end position="107"/>
    </location>
</feature>
<feature type="helix" evidence="5">
    <location>
        <begin position="111"/>
        <end position="121"/>
    </location>
</feature>
<feature type="strand" evidence="5">
    <location>
        <begin position="129"/>
        <end position="132"/>
    </location>
</feature>
<feature type="helix" evidence="5">
    <location>
        <begin position="134"/>
        <end position="136"/>
    </location>
</feature>
<feature type="helix" evidence="5">
    <location>
        <begin position="137"/>
        <end position="144"/>
    </location>
</feature>
<feature type="strand" evidence="5">
    <location>
        <begin position="146"/>
        <end position="155"/>
    </location>
</feature>
<feature type="turn" evidence="5">
    <location>
        <begin position="158"/>
        <end position="160"/>
    </location>
</feature>
<feature type="strand" evidence="5">
    <location>
        <begin position="162"/>
        <end position="164"/>
    </location>
</feature>
<feature type="helix" evidence="5">
    <location>
        <begin position="167"/>
        <end position="175"/>
    </location>
</feature>
<feature type="turn" evidence="5">
    <location>
        <begin position="177"/>
        <end position="180"/>
    </location>
</feature>
<feature type="helix" evidence="5">
    <location>
        <begin position="181"/>
        <end position="185"/>
    </location>
</feature>
<feature type="strand" evidence="5">
    <location>
        <begin position="190"/>
        <end position="194"/>
    </location>
</feature>
<feature type="strand" evidence="5">
    <location>
        <begin position="199"/>
        <end position="208"/>
    </location>
</feature>
<feature type="strand" evidence="5">
    <location>
        <begin position="211"/>
        <end position="220"/>
    </location>
</feature>
<feature type="strand" evidence="5">
    <location>
        <begin position="232"/>
        <end position="236"/>
    </location>
</feature>
<feature type="helix" evidence="5">
    <location>
        <begin position="244"/>
        <end position="257"/>
    </location>
</feature>
<feature type="strand" evidence="5">
    <location>
        <begin position="262"/>
        <end position="271"/>
    </location>
</feature>
<feature type="strand" evidence="5">
    <location>
        <begin position="277"/>
        <end position="285"/>
    </location>
</feature>
<feature type="helix" evidence="5">
    <location>
        <begin position="290"/>
        <end position="299"/>
    </location>
</feature>
<feature type="helix" evidence="5">
    <location>
        <begin position="303"/>
        <end position="311"/>
    </location>
</feature>
<feature type="strand" evidence="5">
    <location>
        <begin position="324"/>
        <end position="332"/>
    </location>
</feature>
<feature type="strand" evidence="5">
    <location>
        <begin position="336"/>
        <end position="338"/>
    </location>
</feature>
<feature type="helix" evidence="5">
    <location>
        <begin position="345"/>
        <end position="349"/>
    </location>
</feature>
<feature type="strand" evidence="5">
    <location>
        <begin position="354"/>
        <end position="361"/>
    </location>
</feature>
<feature type="strand" evidence="5">
    <location>
        <begin position="378"/>
        <end position="387"/>
    </location>
</feature>
<feature type="helix" evidence="5">
    <location>
        <begin position="388"/>
        <end position="400"/>
    </location>
</feature>